<proteinExistence type="inferred from homology"/>
<feature type="chain" id="PRO_0000346408" description="Methylenetetrahydrofolate--tRNA-(uracil-5-)-methyltransferase TrmFO">
    <location>
        <begin position="1"/>
        <end position="459"/>
    </location>
</feature>
<feature type="binding site" evidence="1">
    <location>
        <begin position="26"/>
        <end position="31"/>
    </location>
    <ligand>
        <name>FAD</name>
        <dbReference type="ChEBI" id="CHEBI:57692"/>
    </ligand>
</feature>
<comment type="function">
    <text evidence="1">Catalyzes the folate-dependent formation of 5-methyl-uridine at position 54 (M-5-U54) in all tRNAs.</text>
</comment>
<comment type="catalytic activity">
    <reaction evidence="1">
        <text>uridine(54) in tRNA + (6R)-5,10-methylene-5,6,7,8-tetrahydrofolate + NADH + H(+) = 5-methyluridine(54) in tRNA + (6S)-5,6,7,8-tetrahydrofolate + NAD(+)</text>
        <dbReference type="Rhea" id="RHEA:16873"/>
        <dbReference type="Rhea" id="RHEA-COMP:10167"/>
        <dbReference type="Rhea" id="RHEA-COMP:10193"/>
        <dbReference type="ChEBI" id="CHEBI:15378"/>
        <dbReference type="ChEBI" id="CHEBI:15636"/>
        <dbReference type="ChEBI" id="CHEBI:57453"/>
        <dbReference type="ChEBI" id="CHEBI:57540"/>
        <dbReference type="ChEBI" id="CHEBI:57945"/>
        <dbReference type="ChEBI" id="CHEBI:65315"/>
        <dbReference type="ChEBI" id="CHEBI:74447"/>
        <dbReference type="EC" id="2.1.1.74"/>
    </reaction>
</comment>
<comment type="catalytic activity">
    <reaction evidence="1">
        <text>uridine(54) in tRNA + (6R)-5,10-methylene-5,6,7,8-tetrahydrofolate + NADPH + H(+) = 5-methyluridine(54) in tRNA + (6S)-5,6,7,8-tetrahydrofolate + NADP(+)</text>
        <dbReference type="Rhea" id="RHEA:62372"/>
        <dbReference type="Rhea" id="RHEA-COMP:10167"/>
        <dbReference type="Rhea" id="RHEA-COMP:10193"/>
        <dbReference type="ChEBI" id="CHEBI:15378"/>
        <dbReference type="ChEBI" id="CHEBI:15636"/>
        <dbReference type="ChEBI" id="CHEBI:57453"/>
        <dbReference type="ChEBI" id="CHEBI:57783"/>
        <dbReference type="ChEBI" id="CHEBI:58349"/>
        <dbReference type="ChEBI" id="CHEBI:65315"/>
        <dbReference type="ChEBI" id="CHEBI:74447"/>
        <dbReference type="EC" id="2.1.1.74"/>
    </reaction>
</comment>
<comment type="cofactor">
    <cofactor evidence="1">
        <name>FAD</name>
        <dbReference type="ChEBI" id="CHEBI:57692"/>
    </cofactor>
</comment>
<comment type="subcellular location">
    <subcellularLocation>
        <location evidence="1">Cytoplasm</location>
    </subcellularLocation>
</comment>
<comment type="similarity">
    <text evidence="1">Belongs to the MnmG family. TrmFO subfamily.</text>
</comment>
<accession>Q2JQ64</accession>
<gene>
    <name evidence="1" type="primary">trmFO</name>
    <name type="ordered locus">CYB_0051</name>
</gene>
<evidence type="ECO:0000255" key="1">
    <source>
        <dbReference type="HAMAP-Rule" id="MF_01037"/>
    </source>
</evidence>
<protein>
    <recommendedName>
        <fullName evidence="1">Methylenetetrahydrofolate--tRNA-(uracil-5-)-methyltransferase TrmFO</fullName>
        <ecNumber evidence="1">2.1.1.74</ecNumber>
    </recommendedName>
    <alternativeName>
        <fullName evidence="1">Folate-dependent tRNA (uracil-5-)-methyltransferase</fullName>
    </alternativeName>
    <alternativeName>
        <fullName evidence="1">Folate-dependent tRNA(M-5-U54)-methyltransferase</fullName>
    </alternativeName>
</protein>
<organism>
    <name type="scientific">Synechococcus sp. (strain JA-2-3B'a(2-13))</name>
    <name type="common">Cyanobacteria bacterium Yellowstone B-Prime</name>
    <dbReference type="NCBI Taxonomy" id="321332"/>
    <lineage>
        <taxon>Bacteria</taxon>
        <taxon>Bacillati</taxon>
        <taxon>Cyanobacteriota</taxon>
        <taxon>Cyanophyceae</taxon>
        <taxon>Synechococcales</taxon>
        <taxon>Synechococcaceae</taxon>
        <taxon>Synechococcus</taxon>
    </lineage>
</organism>
<name>TRMFO_SYNJB</name>
<reference key="1">
    <citation type="journal article" date="2007" name="ISME J.">
        <title>Population level functional diversity in a microbial community revealed by comparative genomic and metagenomic analyses.</title>
        <authorList>
            <person name="Bhaya D."/>
            <person name="Grossman A.R."/>
            <person name="Steunou A.-S."/>
            <person name="Khuri N."/>
            <person name="Cohan F.M."/>
            <person name="Hamamura N."/>
            <person name="Melendrez M.C."/>
            <person name="Bateson M.M."/>
            <person name="Ward D.M."/>
            <person name="Heidelberg J.F."/>
        </authorList>
    </citation>
    <scope>NUCLEOTIDE SEQUENCE [LARGE SCALE GENOMIC DNA]</scope>
    <source>
        <strain>JA-2-3B'a(2-13)</strain>
    </source>
</reference>
<sequence>MNPPTNPRACSPLARAGSFAPIHVVGGGLAGTEAAWQIAQAGLPVILSEMRPVRQSPAHHTDQLGELVCSNSFGAAASDRAAGLLKEELRQLGSLVIATADCHAVPAGGALAVDRARFSQALTEAIQNHPRITLRREEVTEIPEGIAVLCTGPLTSDPLAKALQAFTGLEYLSFFDASSPIVTGDSLNRAVVFQASRYDKGEAAYLNCPMTEAEYERFWRALVEAEQAPLKDFEREERKFFEGCLPIEEMARRGKDTLCFGPLKPVGLVDPRTGSRPYAVVQLRQEDKAGQLWNLVGFQTNLKWGEQQRVFRLIPGLEQAEFVRFGVMHRNTFLNSPQLLWPTLQFRRRPTLFAAGQLVGTEGYACAVAGGWLAGQNAARLALGLPLITLPPETMMGSLFQFISSADPRHFQPMPANFGLLPDLEGRKLRNKQERYGRYRDRALAALKTTGLVRQVQTA</sequence>
<dbReference type="EC" id="2.1.1.74" evidence="1"/>
<dbReference type="EMBL" id="CP000240">
    <property type="protein sequence ID" value="ABD01052.1"/>
    <property type="molecule type" value="Genomic_DNA"/>
</dbReference>
<dbReference type="RefSeq" id="WP_011431723.1">
    <property type="nucleotide sequence ID" value="NC_007776.1"/>
</dbReference>
<dbReference type="SMR" id="Q2JQ64"/>
<dbReference type="STRING" id="321332.CYB_0051"/>
<dbReference type="KEGG" id="cyb:CYB_0051"/>
<dbReference type="eggNOG" id="COG1206">
    <property type="taxonomic scope" value="Bacteria"/>
</dbReference>
<dbReference type="HOGENOM" id="CLU_033057_1_0_3"/>
<dbReference type="OrthoDB" id="9803114at2"/>
<dbReference type="Proteomes" id="UP000001938">
    <property type="component" value="Chromosome"/>
</dbReference>
<dbReference type="GO" id="GO:0005829">
    <property type="term" value="C:cytosol"/>
    <property type="evidence" value="ECO:0007669"/>
    <property type="project" value="TreeGrafter"/>
</dbReference>
<dbReference type="GO" id="GO:0050660">
    <property type="term" value="F:flavin adenine dinucleotide binding"/>
    <property type="evidence" value="ECO:0007669"/>
    <property type="project" value="UniProtKB-UniRule"/>
</dbReference>
<dbReference type="GO" id="GO:0047151">
    <property type="term" value="F:tRNA (uracil(54)-C5)-methyltransferase activity, 5,10-methylenetetrahydrofolate-dependent"/>
    <property type="evidence" value="ECO:0007669"/>
    <property type="project" value="UniProtKB-UniRule"/>
</dbReference>
<dbReference type="GO" id="GO:0030488">
    <property type="term" value="P:tRNA methylation"/>
    <property type="evidence" value="ECO:0007669"/>
    <property type="project" value="TreeGrafter"/>
</dbReference>
<dbReference type="GO" id="GO:0002098">
    <property type="term" value="P:tRNA wobble uridine modification"/>
    <property type="evidence" value="ECO:0007669"/>
    <property type="project" value="TreeGrafter"/>
</dbReference>
<dbReference type="Gene3D" id="3.50.50.60">
    <property type="entry name" value="FAD/NAD(P)-binding domain"/>
    <property type="match status" value="2"/>
</dbReference>
<dbReference type="HAMAP" id="MF_01037">
    <property type="entry name" value="TrmFO"/>
    <property type="match status" value="1"/>
</dbReference>
<dbReference type="InterPro" id="IPR036188">
    <property type="entry name" value="FAD/NAD-bd_sf"/>
</dbReference>
<dbReference type="InterPro" id="IPR002218">
    <property type="entry name" value="MnmG-rel"/>
</dbReference>
<dbReference type="InterPro" id="IPR040131">
    <property type="entry name" value="MnmG_N"/>
</dbReference>
<dbReference type="InterPro" id="IPR004417">
    <property type="entry name" value="TrmFO"/>
</dbReference>
<dbReference type="NCBIfam" id="TIGR00137">
    <property type="entry name" value="gid_trmFO"/>
    <property type="match status" value="1"/>
</dbReference>
<dbReference type="NCBIfam" id="NF003739">
    <property type="entry name" value="PRK05335.1"/>
    <property type="match status" value="1"/>
</dbReference>
<dbReference type="PANTHER" id="PTHR11806">
    <property type="entry name" value="GLUCOSE INHIBITED DIVISION PROTEIN A"/>
    <property type="match status" value="1"/>
</dbReference>
<dbReference type="PANTHER" id="PTHR11806:SF2">
    <property type="entry name" value="METHYLENETETRAHYDROFOLATE--TRNA-(URACIL-5-)-METHYLTRANSFERASE TRMFO"/>
    <property type="match status" value="1"/>
</dbReference>
<dbReference type="Pfam" id="PF01134">
    <property type="entry name" value="GIDA"/>
    <property type="match status" value="1"/>
</dbReference>
<dbReference type="SUPFAM" id="SSF51905">
    <property type="entry name" value="FAD/NAD(P)-binding domain"/>
    <property type="match status" value="1"/>
</dbReference>
<keyword id="KW-0963">Cytoplasm</keyword>
<keyword id="KW-0274">FAD</keyword>
<keyword id="KW-0285">Flavoprotein</keyword>
<keyword id="KW-0489">Methyltransferase</keyword>
<keyword id="KW-0520">NAD</keyword>
<keyword id="KW-0521">NADP</keyword>
<keyword id="KW-1185">Reference proteome</keyword>
<keyword id="KW-0808">Transferase</keyword>
<keyword id="KW-0819">tRNA processing</keyword>